<protein>
    <recommendedName>
        <fullName evidence="1">Asparagine--tRNA ligase</fullName>
        <ecNumber evidence="1">6.1.1.22</ecNumber>
    </recommendedName>
    <alternativeName>
        <fullName evidence="1">Asparaginyl-tRNA synthetase</fullName>
        <shortName evidence="1">AsnRS</shortName>
    </alternativeName>
</protein>
<feature type="chain" id="PRO_1000211906" description="Asparagine--tRNA ligase">
    <location>
        <begin position="1"/>
        <end position="469"/>
    </location>
</feature>
<comment type="catalytic activity">
    <reaction evidence="1">
        <text>tRNA(Asn) + L-asparagine + ATP = L-asparaginyl-tRNA(Asn) + AMP + diphosphate + H(+)</text>
        <dbReference type="Rhea" id="RHEA:11180"/>
        <dbReference type="Rhea" id="RHEA-COMP:9659"/>
        <dbReference type="Rhea" id="RHEA-COMP:9674"/>
        <dbReference type="ChEBI" id="CHEBI:15378"/>
        <dbReference type="ChEBI" id="CHEBI:30616"/>
        <dbReference type="ChEBI" id="CHEBI:33019"/>
        <dbReference type="ChEBI" id="CHEBI:58048"/>
        <dbReference type="ChEBI" id="CHEBI:78442"/>
        <dbReference type="ChEBI" id="CHEBI:78515"/>
        <dbReference type="ChEBI" id="CHEBI:456215"/>
        <dbReference type="EC" id="6.1.1.22"/>
    </reaction>
</comment>
<comment type="subunit">
    <text evidence="1">Homodimer.</text>
</comment>
<comment type="subcellular location">
    <subcellularLocation>
        <location evidence="1">Cytoplasm</location>
    </subcellularLocation>
</comment>
<comment type="similarity">
    <text evidence="1">Belongs to the class-II aminoacyl-tRNA synthetase family.</text>
</comment>
<gene>
    <name evidence="1" type="primary">asnS</name>
    <name type="ordered locus">PGN_1218</name>
</gene>
<organism>
    <name type="scientific">Porphyromonas gingivalis (strain ATCC 33277 / DSM 20709 / CIP 103683 / JCM 12257 / NCTC 11834 / 2561)</name>
    <dbReference type="NCBI Taxonomy" id="431947"/>
    <lineage>
        <taxon>Bacteria</taxon>
        <taxon>Pseudomonadati</taxon>
        <taxon>Bacteroidota</taxon>
        <taxon>Bacteroidia</taxon>
        <taxon>Bacteroidales</taxon>
        <taxon>Porphyromonadaceae</taxon>
        <taxon>Porphyromonas</taxon>
    </lineage>
</organism>
<keyword id="KW-0030">Aminoacyl-tRNA synthetase</keyword>
<keyword id="KW-0067">ATP-binding</keyword>
<keyword id="KW-0963">Cytoplasm</keyword>
<keyword id="KW-0436">Ligase</keyword>
<keyword id="KW-0547">Nucleotide-binding</keyword>
<keyword id="KW-0648">Protein biosynthesis</keyword>
<reference key="1">
    <citation type="journal article" date="2008" name="DNA Res.">
        <title>Determination of the genome sequence of Porphyromonas gingivalis strain ATCC 33277 and genomic comparison with strain W83 revealed extensive genome rearrangements in P. gingivalis.</title>
        <authorList>
            <person name="Naito M."/>
            <person name="Hirakawa H."/>
            <person name="Yamashita A."/>
            <person name="Ohara N."/>
            <person name="Shoji M."/>
            <person name="Yukitake H."/>
            <person name="Nakayama K."/>
            <person name="Toh H."/>
            <person name="Yoshimura F."/>
            <person name="Kuhara S."/>
            <person name="Hattori M."/>
            <person name="Hayashi T."/>
            <person name="Nakayama K."/>
        </authorList>
    </citation>
    <scope>NUCLEOTIDE SEQUENCE [LARGE SCALE GENOMIC DNA]</scope>
    <source>
        <strain>ATCC 33277 / DSM 20709 / CIP 103683 / JCM 12257 / NCTC 11834 / 2561</strain>
    </source>
</reference>
<proteinExistence type="inferred from homology"/>
<dbReference type="EC" id="6.1.1.22" evidence="1"/>
<dbReference type="EMBL" id="AP009380">
    <property type="protein sequence ID" value="BAG33737.1"/>
    <property type="molecule type" value="Genomic_DNA"/>
</dbReference>
<dbReference type="RefSeq" id="WP_012458114.1">
    <property type="nucleotide sequence ID" value="NC_010729.1"/>
</dbReference>
<dbReference type="SMR" id="B2RK42"/>
<dbReference type="GeneID" id="29256423"/>
<dbReference type="KEGG" id="pgn:PGN_1218"/>
<dbReference type="eggNOG" id="COG0017">
    <property type="taxonomic scope" value="Bacteria"/>
</dbReference>
<dbReference type="HOGENOM" id="CLU_004553_2_0_10"/>
<dbReference type="OrthoDB" id="9802326at2"/>
<dbReference type="BioCyc" id="PGIN431947:G1G2V-1394-MONOMER"/>
<dbReference type="Proteomes" id="UP000008842">
    <property type="component" value="Chromosome"/>
</dbReference>
<dbReference type="GO" id="GO:0005737">
    <property type="term" value="C:cytoplasm"/>
    <property type="evidence" value="ECO:0007669"/>
    <property type="project" value="UniProtKB-SubCell"/>
</dbReference>
<dbReference type="GO" id="GO:0004816">
    <property type="term" value="F:asparagine-tRNA ligase activity"/>
    <property type="evidence" value="ECO:0007669"/>
    <property type="project" value="UniProtKB-UniRule"/>
</dbReference>
<dbReference type="GO" id="GO:0005524">
    <property type="term" value="F:ATP binding"/>
    <property type="evidence" value="ECO:0007669"/>
    <property type="project" value="UniProtKB-UniRule"/>
</dbReference>
<dbReference type="GO" id="GO:0003676">
    <property type="term" value="F:nucleic acid binding"/>
    <property type="evidence" value="ECO:0007669"/>
    <property type="project" value="InterPro"/>
</dbReference>
<dbReference type="GO" id="GO:0006421">
    <property type="term" value="P:asparaginyl-tRNA aminoacylation"/>
    <property type="evidence" value="ECO:0007669"/>
    <property type="project" value="UniProtKB-UniRule"/>
</dbReference>
<dbReference type="CDD" id="cd00776">
    <property type="entry name" value="AsxRS_core"/>
    <property type="match status" value="1"/>
</dbReference>
<dbReference type="CDD" id="cd04318">
    <property type="entry name" value="EcAsnRS_like_N"/>
    <property type="match status" value="1"/>
</dbReference>
<dbReference type="FunFam" id="3.30.930.10:FF:000016">
    <property type="entry name" value="Asparagine--tRNA ligase"/>
    <property type="match status" value="1"/>
</dbReference>
<dbReference type="Gene3D" id="3.30.930.10">
    <property type="entry name" value="Bira Bifunctional Protein, Domain 2"/>
    <property type="match status" value="1"/>
</dbReference>
<dbReference type="Gene3D" id="2.40.50.140">
    <property type="entry name" value="Nucleic acid-binding proteins"/>
    <property type="match status" value="1"/>
</dbReference>
<dbReference type="HAMAP" id="MF_00534">
    <property type="entry name" value="Asn_tRNA_synth"/>
    <property type="match status" value="1"/>
</dbReference>
<dbReference type="InterPro" id="IPR004364">
    <property type="entry name" value="Aa-tRNA-synt_II"/>
</dbReference>
<dbReference type="InterPro" id="IPR006195">
    <property type="entry name" value="aa-tRNA-synth_II"/>
</dbReference>
<dbReference type="InterPro" id="IPR045864">
    <property type="entry name" value="aa-tRNA-synth_II/BPL/LPL"/>
</dbReference>
<dbReference type="InterPro" id="IPR004522">
    <property type="entry name" value="Asn-tRNA-ligase"/>
</dbReference>
<dbReference type="InterPro" id="IPR002312">
    <property type="entry name" value="Asp/Asn-tRNA-synth_IIb"/>
</dbReference>
<dbReference type="InterPro" id="IPR012340">
    <property type="entry name" value="NA-bd_OB-fold"/>
</dbReference>
<dbReference type="InterPro" id="IPR004365">
    <property type="entry name" value="NA-bd_OB_tRNA"/>
</dbReference>
<dbReference type="NCBIfam" id="TIGR00457">
    <property type="entry name" value="asnS"/>
    <property type="match status" value="1"/>
</dbReference>
<dbReference type="NCBIfam" id="NF003037">
    <property type="entry name" value="PRK03932.1"/>
    <property type="match status" value="1"/>
</dbReference>
<dbReference type="PANTHER" id="PTHR22594:SF34">
    <property type="entry name" value="ASPARAGINE--TRNA LIGASE, MITOCHONDRIAL-RELATED"/>
    <property type="match status" value="1"/>
</dbReference>
<dbReference type="PANTHER" id="PTHR22594">
    <property type="entry name" value="ASPARTYL/LYSYL-TRNA SYNTHETASE"/>
    <property type="match status" value="1"/>
</dbReference>
<dbReference type="Pfam" id="PF00152">
    <property type="entry name" value="tRNA-synt_2"/>
    <property type="match status" value="1"/>
</dbReference>
<dbReference type="Pfam" id="PF01336">
    <property type="entry name" value="tRNA_anti-codon"/>
    <property type="match status" value="1"/>
</dbReference>
<dbReference type="PRINTS" id="PR01042">
    <property type="entry name" value="TRNASYNTHASP"/>
</dbReference>
<dbReference type="SUPFAM" id="SSF55681">
    <property type="entry name" value="Class II aaRS and biotin synthetases"/>
    <property type="match status" value="1"/>
</dbReference>
<dbReference type="SUPFAM" id="SSF50249">
    <property type="entry name" value="Nucleic acid-binding proteins"/>
    <property type="match status" value="1"/>
</dbReference>
<dbReference type="PROSITE" id="PS50862">
    <property type="entry name" value="AA_TRNA_LIGASE_II"/>
    <property type="match status" value="1"/>
</dbReference>
<accession>B2RK42</accession>
<name>SYN_PORG3</name>
<sequence>MDKKMKRTRIADALHGGLVGQEINIKGWVRTKRGNKAVNFIALNDGSTIHNMQIVADLASFDAAQMSQITTGACIGVIGTLVESQGAGQSVEVQASAIEIYGTADPATYPLQKKGHTLEFLREIAHLRPRTNTFGVIYRIRHHMAIAIHTFFHNKGYYYFHAPLITASDCEGAGQMFQVTTLNPDSLPRTEEGQVDYRKDFFGRHTSLTVSGQLEGEMAAMALGGIYTFGPTFRAENSNTPRHLAEFWMIEPEVAFLEIEDNMDLAEEFIKYCVQWALDNCMDDISFLSEHFDKELIDRLKFVLEKPFVRLAYTEGIRILEEAVKNGVKFEFPIYWGADLASEHERYLVEVHFKTPVIMTDYPKEIKSFYMKLNDDGKTVRGMDVLFPKIGEIIGGSEREADYDKLVARANEMGVPEKDIWWYLDSRRYGTAPHSGFGLGFERLLLFVTGMSNIRDVIPFPRTPNNAEF</sequence>
<evidence type="ECO:0000255" key="1">
    <source>
        <dbReference type="HAMAP-Rule" id="MF_00534"/>
    </source>
</evidence>